<gene>
    <name evidence="6 9" type="primary">dgt5</name>
    <name evidence="9" type="ORF">CG8828</name>
</gene>
<protein>
    <recommendedName>
        <fullName evidence="7">Augmin complex subunit dgt5</fullName>
    </recommendedName>
    <alternativeName>
        <fullName evidence="6">Dim gamma-tubulin 5</fullName>
    </alternativeName>
</protein>
<feature type="chain" id="PRO_0000438654" description="Augmin complex subunit dgt5" evidence="7">
    <location>
        <begin position="1"/>
        <end position="685"/>
    </location>
</feature>
<feature type="coiled-coil region" evidence="1">
    <location>
        <begin position="87"/>
        <end position="165"/>
    </location>
</feature>
<feature type="coiled-coil region" evidence="1">
    <location>
        <begin position="342"/>
        <end position="379"/>
    </location>
</feature>
<name>DGT5_DROME</name>
<sequence>MAYQEKITEFKNWATNLGCPPTALPTDDALRRIFKSGSSLLLNQLQSRIQPVDYVREVRENLLIAQVARYKDKMVPLASRSFQPPELQRYQKIQELKKHKEKANQQLTEARKEYQKLSAGIKTKNIQTISAENRKQLLESKCNILDLKLESLNKNYDQELKNKIQILGTTPVKLSARNASEAQATRAVEQALKQLETFYGMCDDGNAVNNLAEAKQRLWDQMRSTFADIPNSLLLNVVMKIKEEQLQHIMKLNESRGECTNDKPPLNNYEVKLLKTKADMLGLAAKYFAAQKELELKEERFCQDYSVFVDKLQSKVYRFNGISLGDEENADELISDYLVQYNMRNFNRSQNEFLREQIEQLRLELDAGAKQLENHDLKLGSVKQVYGDINSSINRIQQDMVQLSQIKEKILFSRNMMKNLLDDMQAATQKQNAKSQLMSTKLKVSNMSMLGAESFCLANDSVFSSTKVEFDGNCSAINSTMRRSFDNKTLVPGGAASTTLMAASGATLPSHLLEFNTFLEIPLEKFSCTPRACSFLLSANPLIVEAQELASTVQLAPGYLLTPFGALQEVRKRILWASAIAAHTSELKLNLQPLIVDPHDLRLKASRQHEEIDQLLDNLMAIGVKTQLQLEKAERIYQFLLENPLRRYVPPSKRYNNGSFADYESEFNLYYRMTTNGSSMRAPPN</sequence>
<organism evidence="8">
    <name type="scientific">Drosophila melanogaster</name>
    <name type="common">Fruit fly</name>
    <dbReference type="NCBI Taxonomy" id="7227"/>
    <lineage>
        <taxon>Eukaryota</taxon>
        <taxon>Metazoa</taxon>
        <taxon>Ecdysozoa</taxon>
        <taxon>Arthropoda</taxon>
        <taxon>Hexapoda</taxon>
        <taxon>Insecta</taxon>
        <taxon>Pterygota</taxon>
        <taxon>Neoptera</taxon>
        <taxon>Endopterygota</taxon>
        <taxon>Diptera</taxon>
        <taxon>Brachycera</taxon>
        <taxon>Muscomorpha</taxon>
        <taxon>Ephydroidea</taxon>
        <taxon>Drosophilidae</taxon>
        <taxon>Drosophila</taxon>
        <taxon>Sophophora</taxon>
    </lineage>
</organism>
<reference evidence="10" key="1">
    <citation type="journal article" date="2000" name="Science">
        <title>The genome sequence of Drosophila melanogaster.</title>
        <authorList>
            <person name="Adams M.D."/>
            <person name="Celniker S.E."/>
            <person name="Holt R.A."/>
            <person name="Evans C.A."/>
            <person name="Gocayne J.D."/>
            <person name="Amanatides P.G."/>
            <person name="Scherer S.E."/>
            <person name="Li P.W."/>
            <person name="Hoskins R.A."/>
            <person name="Galle R.F."/>
            <person name="George R.A."/>
            <person name="Lewis S.E."/>
            <person name="Richards S."/>
            <person name="Ashburner M."/>
            <person name="Henderson S.N."/>
            <person name="Sutton G.G."/>
            <person name="Wortman J.R."/>
            <person name="Yandell M.D."/>
            <person name="Zhang Q."/>
            <person name="Chen L.X."/>
            <person name="Brandon R.C."/>
            <person name="Rogers Y.-H.C."/>
            <person name="Blazej R.G."/>
            <person name="Champe M."/>
            <person name="Pfeiffer B.D."/>
            <person name="Wan K.H."/>
            <person name="Doyle C."/>
            <person name="Baxter E.G."/>
            <person name="Helt G."/>
            <person name="Nelson C.R."/>
            <person name="Miklos G.L.G."/>
            <person name="Abril J.F."/>
            <person name="Agbayani A."/>
            <person name="An H.-J."/>
            <person name="Andrews-Pfannkoch C."/>
            <person name="Baldwin D."/>
            <person name="Ballew R.M."/>
            <person name="Basu A."/>
            <person name="Baxendale J."/>
            <person name="Bayraktaroglu L."/>
            <person name="Beasley E.M."/>
            <person name="Beeson K.Y."/>
            <person name="Benos P.V."/>
            <person name="Berman B.P."/>
            <person name="Bhandari D."/>
            <person name="Bolshakov S."/>
            <person name="Borkova D."/>
            <person name="Botchan M.R."/>
            <person name="Bouck J."/>
            <person name="Brokstein P."/>
            <person name="Brottier P."/>
            <person name="Burtis K.C."/>
            <person name="Busam D.A."/>
            <person name="Butler H."/>
            <person name="Cadieu E."/>
            <person name="Center A."/>
            <person name="Chandra I."/>
            <person name="Cherry J.M."/>
            <person name="Cawley S."/>
            <person name="Dahlke C."/>
            <person name="Davenport L.B."/>
            <person name="Davies P."/>
            <person name="de Pablos B."/>
            <person name="Delcher A."/>
            <person name="Deng Z."/>
            <person name="Mays A.D."/>
            <person name="Dew I."/>
            <person name="Dietz S.M."/>
            <person name="Dodson K."/>
            <person name="Doup L.E."/>
            <person name="Downes M."/>
            <person name="Dugan-Rocha S."/>
            <person name="Dunkov B.C."/>
            <person name="Dunn P."/>
            <person name="Durbin K.J."/>
            <person name="Evangelista C.C."/>
            <person name="Ferraz C."/>
            <person name="Ferriera S."/>
            <person name="Fleischmann W."/>
            <person name="Fosler C."/>
            <person name="Gabrielian A.E."/>
            <person name="Garg N.S."/>
            <person name="Gelbart W.M."/>
            <person name="Glasser K."/>
            <person name="Glodek A."/>
            <person name="Gong F."/>
            <person name="Gorrell J.H."/>
            <person name="Gu Z."/>
            <person name="Guan P."/>
            <person name="Harris M."/>
            <person name="Harris N.L."/>
            <person name="Harvey D.A."/>
            <person name="Heiman T.J."/>
            <person name="Hernandez J.R."/>
            <person name="Houck J."/>
            <person name="Hostin D."/>
            <person name="Houston K.A."/>
            <person name="Howland T.J."/>
            <person name="Wei M.-H."/>
            <person name="Ibegwam C."/>
            <person name="Jalali M."/>
            <person name="Kalush F."/>
            <person name="Karpen G.H."/>
            <person name="Ke Z."/>
            <person name="Kennison J.A."/>
            <person name="Ketchum K.A."/>
            <person name="Kimmel B.E."/>
            <person name="Kodira C.D."/>
            <person name="Kraft C.L."/>
            <person name="Kravitz S."/>
            <person name="Kulp D."/>
            <person name="Lai Z."/>
            <person name="Lasko P."/>
            <person name="Lei Y."/>
            <person name="Levitsky A.A."/>
            <person name="Li J.H."/>
            <person name="Li Z."/>
            <person name="Liang Y."/>
            <person name="Lin X."/>
            <person name="Liu X."/>
            <person name="Mattei B."/>
            <person name="McIntosh T.C."/>
            <person name="McLeod M.P."/>
            <person name="McPherson D."/>
            <person name="Merkulov G."/>
            <person name="Milshina N.V."/>
            <person name="Mobarry C."/>
            <person name="Morris J."/>
            <person name="Moshrefi A."/>
            <person name="Mount S.M."/>
            <person name="Moy M."/>
            <person name="Murphy B."/>
            <person name="Murphy L."/>
            <person name="Muzny D.M."/>
            <person name="Nelson D.L."/>
            <person name="Nelson D.R."/>
            <person name="Nelson K.A."/>
            <person name="Nixon K."/>
            <person name="Nusskern D.R."/>
            <person name="Pacleb J.M."/>
            <person name="Palazzolo M."/>
            <person name="Pittman G.S."/>
            <person name="Pan S."/>
            <person name="Pollard J."/>
            <person name="Puri V."/>
            <person name="Reese M.G."/>
            <person name="Reinert K."/>
            <person name="Remington K."/>
            <person name="Saunders R.D.C."/>
            <person name="Scheeler F."/>
            <person name="Shen H."/>
            <person name="Shue B.C."/>
            <person name="Siden-Kiamos I."/>
            <person name="Simpson M."/>
            <person name="Skupski M.P."/>
            <person name="Smith T.J."/>
            <person name="Spier E."/>
            <person name="Spradling A.C."/>
            <person name="Stapleton M."/>
            <person name="Strong R."/>
            <person name="Sun E."/>
            <person name="Svirskas R."/>
            <person name="Tector C."/>
            <person name="Turner R."/>
            <person name="Venter E."/>
            <person name="Wang A.H."/>
            <person name="Wang X."/>
            <person name="Wang Z.-Y."/>
            <person name="Wassarman D.A."/>
            <person name="Weinstock G.M."/>
            <person name="Weissenbach J."/>
            <person name="Williams S.M."/>
            <person name="Woodage T."/>
            <person name="Worley K.C."/>
            <person name="Wu D."/>
            <person name="Yang S."/>
            <person name="Yao Q.A."/>
            <person name="Ye J."/>
            <person name="Yeh R.-F."/>
            <person name="Zaveri J.S."/>
            <person name="Zhan M."/>
            <person name="Zhang G."/>
            <person name="Zhao Q."/>
            <person name="Zheng L."/>
            <person name="Zheng X.H."/>
            <person name="Zhong F.N."/>
            <person name="Zhong W."/>
            <person name="Zhou X."/>
            <person name="Zhu S.C."/>
            <person name="Zhu X."/>
            <person name="Smith H.O."/>
            <person name="Gibbs R.A."/>
            <person name="Myers E.W."/>
            <person name="Rubin G.M."/>
            <person name="Venter J.C."/>
        </authorList>
    </citation>
    <scope>NUCLEOTIDE SEQUENCE [LARGE SCALE GENOMIC DNA]</scope>
    <source>
        <strain evidence="10">Berkeley</strain>
    </source>
</reference>
<reference evidence="10" key="2">
    <citation type="journal article" date="2002" name="Genome Biol.">
        <title>Annotation of the Drosophila melanogaster euchromatic genome: a systematic review.</title>
        <authorList>
            <person name="Misra S."/>
            <person name="Crosby M.A."/>
            <person name="Mungall C.J."/>
            <person name="Matthews B.B."/>
            <person name="Campbell K.S."/>
            <person name="Hradecky P."/>
            <person name="Huang Y."/>
            <person name="Kaminker J.S."/>
            <person name="Millburn G.H."/>
            <person name="Prochnik S.E."/>
            <person name="Smith C.D."/>
            <person name="Tupy J.L."/>
            <person name="Whitfield E.J."/>
            <person name="Bayraktaroglu L."/>
            <person name="Berman B.P."/>
            <person name="Bettencourt B.R."/>
            <person name="Celniker S.E."/>
            <person name="de Grey A.D.N.J."/>
            <person name="Drysdale R.A."/>
            <person name="Harris N.L."/>
            <person name="Richter J."/>
            <person name="Russo S."/>
            <person name="Schroeder A.J."/>
            <person name="Shu S.Q."/>
            <person name="Stapleton M."/>
            <person name="Yamada C."/>
            <person name="Ashburner M."/>
            <person name="Gelbart W.M."/>
            <person name="Rubin G.M."/>
            <person name="Lewis S.E."/>
        </authorList>
    </citation>
    <scope>GENOME REANNOTATION</scope>
    <source>
        <strain evidence="10">Berkeley</strain>
    </source>
</reference>
<reference evidence="8" key="3">
    <citation type="journal article" date="2002" name="Genome Biol.">
        <title>A Drosophila full-length cDNA resource.</title>
        <authorList>
            <person name="Stapleton M."/>
            <person name="Carlson J.W."/>
            <person name="Brokstein P."/>
            <person name="Yu C."/>
            <person name="Champe M."/>
            <person name="George R.A."/>
            <person name="Guarin H."/>
            <person name="Kronmiller B."/>
            <person name="Pacleb J.M."/>
            <person name="Park S."/>
            <person name="Wan K.H."/>
            <person name="Rubin G.M."/>
            <person name="Celniker S.E."/>
        </authorList>
    </citation>
    <scope>NUCLEOTIDE SEQUENCE [LARGE SCALE MRNA]</scope>
    <source>
        <strain evidence="8">Berkeley</strain>
        <tissue evidence="8">Embryo</tissue>
    </source>
</reference>
<reference evidence="7" key="4">
    <citation type="journal article" date="2007" name="Science">
        <title>Genes required for mitotic spindle assembly in Drosophila S2 cells.</title>
        <authorList>
            <person name="Goshima G."/>
            <person name="Wollman R."/>
            <person name="Goodwin S.S."/>
            <person name="Zhang N."/>
            <person name="Scholey J.M."/>
            <person name="Vale R.D."/>
            <person name="Stuurman N."/>
        </authorList>
    </citation>
    <scope>FUNCTION</scope>
    <scope>SUBCELLULAR LOCATION</scope>
</reference>
<reference evidence="7" key="5">
    <citation type="journal article" date="2008" name="J. Cell Biol.">
        <title>Augmin: a protein complex required for centrosome-independent microtubule generation within the spindle.</title>
        <authorList>
            <person name="Goshima G."/>
            <person name="Mayer M."/>
            <person name="Zhang N."/>
            <person name="Stuurman N."/>
            <person name="Vale R.D."/>
        </authorList>
    </citation>
    <scope>FUNCTION</scope>
    <scope>IDENTIFICATION IN THE AUGMIN COMPLEX</scope>
    <scope>SUBCELLULAR LOCATION</scope>
</reference>
<reference evidence="7" key="6">
    <citation type="journal article" date="2009" name="Proc. Natl. Acad. Sci. U.S.A.">
        <title>The augmin complex plays a critical role in spindle microtubule generation for mitotic progression and cytokinesis in human cells.</title>
        <authorList>
            <person name="Uehara R."/>
            <person name="Nozawa R.-S."/>
            <person name="Tomioka A."/>
            <person name="Petry S."/>
            <person name="Vale R.D."/>
            <person name="Obuse C."/>
            <person name="Goshima G."/>
        </authorList>
    </citation>
    <scope>IDENTIFICATION IN THE AUGMIN COMPLEX</scope>
    <scope>IDENTIFICATION BY MASS SPECTROMETRY</scope>
</reference>
<reference evidence="7" key="7">
    <citation type="journal article" date="2014" name="Open Biol.">
        <title>Differing requirements for Augmin in male meiotic and mitotic spindle formation in Drosophila.</title>
        <authorList>
            <person name="Savoian M.S."/>
            <person name="Glover D.M."/>
        </authorList>
    </citation>
    <scope>SUBCELLULAR LOCATION</scope>
</reference>
<dbReference type="EMBL" id="AE013599">
    <property type="protein sequence ID" value="AAF58505.1"/>
    <property type="molecule type" value="Genomic_DNA"/>
</dbReference>
<dbReference type="EMBL" id="AE013599">
    <property type="protein sequence ID" value="AHN56147.1"/>
    <property type="molecule type" value="Genomic_DNA"/>
</dbReference>
<dbReference type="EMBL" id="AY052018">
    <property type="protein sequence ID" value="AAK93442.1"/>
    <property type="molecule type" value="mRNA"/>
</dbReference>
<dbReference type="RefSeq" id="NP_001286349.1">
    <property type="nucleotide sequence ID" value="NM_001299420.1"/>
</dbReference>
<dbReference type="RefSeq" id="NP_610785.1">
    <property type="nucleotide sequence ID" value="NM_136941.3"/>
</dbReference>
<dbReference type="SMR" id="Q7K4B4"/>
<dbReference type="ComplexPortal" id="CPX-9861">
    <property type="entry name" value="Augmin complex"/>
</dbReference>
<dbReference type="DIP" id="DIP-48826N"/>
<dbReference type="FunCoup" id="Q7K4B4">
    <property type="interactions" value="34"/>
</dbReference>
<dbReference type="IntAct" id="Q7K4B4">
    <property type="interactions" value="9"/>
</dbReference>
<dbReference type="STRING" id="7227.FBpp0087059"/>
<dbReference type="PaxDb" id="7227-FBpp0087059"/>
<dbReference type="EnsemblMetazoa" id="FBtr0087948">
    <property type="protein sequence ID" value="FBpp0087059"/>
    <property type="gene ID" value="FBgn0033740"/>
</dbReference>
<dbReference type="EnsemblMetazoa" id="FBtr0339638">
    <property type="protein sequence ID" value="FBpp0308700"/>
    <property type="gene ID" value="FBgn0033740"/>
</dbReference>
<dbReference type="GeneID" id="36364"/>
<dbReference type="KEGG" id="dme:Dmel_CG8828"/>
<dbReference type="UCSC" id="CG8828-RA">
    <property type="organism name" value="d. melanogaster"/>
</dbReference>
<dbReference type="AGR" id="FB:FBgn0033740"/>
<dbReference type="CTD" id="36364"/>
<dbReference type="FlyBase" id="FBgn0033740">
    <property type="gene designation" value="dgt5"/>
</dbReference>
<dbReference type="VEuPathDB" id="VectorBase:FBgn0033740"/>
<dbReference type="eggNOG" id="ENOG502TAUZ">
    <property type="taxonomic scope" value="Eukaryota"/>
</dbReference>
<dbReference type="HOGENOM" id="CLU_432251_0_0_1"/>
<dbReference type="InParanoid" id="Q7K4B4"/>
<dbReference type="OMA" id="YYRMATN"/>
<dbReference type="OrthoDB" id="8047450at2759"/>
<dbReference type="PhylomeDB" id="Q7K4B4"/>
<dbReference type="SignaLink" id="Q7K4B4"/>
<dbReference type="BioGRID-ORCS" id="36364">
    <property type="hits" value="1 hit in 1 CRISPR screen"/>
</dbReference>
<dbReference type="GenomeRNAi" id="36364"/>
<dbReference type="PRO" id="PR:Q7K4B4"/>
<dbReference type="Proteomes" id="UP000000803">
    <property type="component" value="Chromosome 2R"/>
</dbReference>
<dbReference type="Bgee" id="FBgn0033740">
    <property type="expression patterns" value="Expressed in egg cell and 18 other cell types or tissues"/>
</dbReference>
<dbReference type="GO" id="GO:0005813">
    <property type="term" value="C:centrosome"/>
    <property type="evidence" value="ECO:0007669"/>
    <property type="project" value="UniProtKB-SubCell"/>
</dbReference>
<dbReference type="GO" id="GO:0005737">
    <property type="term" value="C:cytoplasm"/>
    <property type="evidence" value="ECO:0007669"/>
    <property type="project" value="UniProtKB-KW"/>
</dbReference>
<dbReference type="GO" id="GO:0070652">
    <property type="term" value="C:HAUS complex"/>
    <property type="evidence" value="ECO:0000314"/>
    <property type="project" value="FlyBase"/>
</dbReference>
<dbReference type="GO" id="GO:0000776">
    <property type="term" value="C:kinetochore"/>
    <property type="evidence" value="ECO:0007669"/>
    <property type="project" value="UniProtKB-KW"/>
</dbReference>
<dbReference type="GO" id="GO:0005874">
    <property type="term" value="C:microtubule"/>
    <property type="evidence" value="ECO:0007669"/>
    <property type="project" value="UniProtKB-KW"/>
</dbReference>
<dbReference type="GO" id="GO:0005819">
    <property type="term" value="C:spindle"/>
    <property type="evidence" value="ECO:0000314"/>
    <property type="project" value="FlyBase"/>
</dbReference>
<dbReference type="GO" id="GO:0030674">
    <property type="term" value="F:protein-macromolecule adaptor activity"/>
    <property type="evidence" value="ECO:0000353"/>
    <property type="project" value="FlyBase"/>
</dbReference>
<dbReference type="GO" id="GO:0051301">
    <property type="term" value="P:cell division"/>
    <property type="evidence" value="ECO:0007669"/>
    <property type="project" value="UniProtKB-KW"/>
</dbReference>
<dbReference type="GO" id="GO:0090307">
    <property type="term" value="P:mitotic spindle assembly"/>
    <property type="evidence" value="ECO:0000314"/>
    <property type="project" value="FlyBase"/>
</dbReference>
<dbReference type="GO" id="GO:0007052">
    <property type="term" value="P:mitotic spindle organization"/>
    <property type="evidence" value="ECO:0000315"/>
    <property type="project" value="FlyBase"/>
</dbReference>
<dbReference type="GO" id="GO:0090221">
    <property type="term" value="P:mitotic spindle-templated microtubule nucleation"/>
    <property type="evidence" value="ECO:0000314"/>
    <property type="project" value="FlyBase"/>
</dbReference>
<dbReference type="GO" id="GO:0007088">
    <property type="term" value="P:regulation of mitotic nuclear division"/>
    <property type="evidence" value="ECO:0000315"/>
    <property type="project" value="FlyBase"/>
</dbReference>
<evidence type="ECO:0000255" key="1"/>
<evidence type="ECO:0000269" key="2">
    <source>
    </source>
</evidence>
<evidence type="ECO:0000269" key="3">
    <source>
    </source>
</evidence>
<evidence type="ECO:0000269" key="4">
    <source>
    </source>
</evidence>
<evidence type="ECO:0000269" key="5">
    <source>
    </source>
</evidence>
<evidence type="ECO:0000303" key="6">
    <source>
    </source>
</evidence>
<evidence type="ECO:0000305" key="7"/>
<evidence type="ECO:0000312" key="8">
    <source>
        <dbReference type="EMBL" id="AAK93442.1"/>
    </source>
</evidence>
<evidence type="ECO:0000312" key="9">
    <source>
        <dbReference type="FlyBase" id="FBgn0033740"/>
    </source>
</evidence>
<evidence type="ECO:0000312" key="10">
    <source>
        <dbReference type="Proteomes" id="UP000000803"/>
    </source>
</evidence>
<accession>Q7K4B4</accession>
<keyword id="KW-0131">Cell cycle</keyword>
<keyword id="KW-0132">Cell division</keyword>
<keyword id="KW-0137">Centromere</keyword>
<keyword id="KW-0158">Chromosome</keyword>
<keyword id="KW-0175">Coiled coil</keyword>
<keyword id="KW-0963">Cytoplasm</keyword>
<keyword id="KW-0206">Cytoskeleton</keyword>
<keyword id="KW-0995">Kinetochore</keyword>
<keyword id="KW-0493">Microtubule</keyword>
<keyword id="KW-0498">Mitosis</keyword>
<keyword id="KW-1185">Reference proteome</keyword>
<proteinExistence type="evidence at protein level"/>
<comment type="function">
    <text evidence="2 3">As part of the augmin complex, plays a role in centrosome-independent generation of spindle microtubules (PubMed:18443220). The complex is required for mitotic spindle assembly through its involvement in localizing gamma-tubulin to spindle microtubules (PubMed:17412918).</text>
</comment>
<comment type="subunit">
    <text evidence="3 4">Component of the augmin complex composed of dgt2, dgt3, dgt4, dgt5, dgt6, msd1, msd5 and wac (PubMed:18443220, PubMed:19369198). The complex interacts directly or indirectly with microtubules and is required for centrosome-independent generation of spindle microtubules (PubMed:18443220).</text>
</comment>
<comment type="subcellular location">
    <subcellularLocation>
        <location evidence="2 3">Cytoplasm</location>
        <location evidence="2 3">Cytoskeleton</location>
        <location evidence="2 3">Spindle</location>
    </subcellularLocation>
    <subcellularLocation>
        <location evidence="3 5">Chromosome</location>
        <location evidence="3 5">Centromere</location>
        <location evidence="3 5">Kinetochore</location>
    </subcellularLocation>
    <subcellularLocation>
        <location evidence="5">Cytoplasm</location>
        <location evidence="5">Cytoskeleton</location>
        <location evidence="5">Microtubule organizing center</location>
        <location evidence="5">Centrosome</location>
    </subcellularLocation>
    <subcellularLocation>
        <location evidence="5">Chromosome</location>
        <location evidence="5">Centromere</location>
    </subcellularLocation>
    <text evidence="3 5">In mitotic cells, detected on kinetochore microtubules but greatly reduced at the spindle equator where only non-kinetochore microtubules are present (PubMed:18443220). During male meiosis, localizes to kinetochores in a microtubule-independent manner but does not concentrate on spindle microtubules (PubMed:24829288).</text>
</comment>
<comment type="miscellaneous">
    <text evidence="6">The name 'dim gamma-tubulin 5' derives from the decreased gamma-tubulin staining of the spindle pole seen following RNAi-mediated knockdown of dgt5 in S2 cells.</text>
</comment>